<organism>
    <name type="scientific">Kluyveromyces lactis (strain ATCC 8585 / CBS 2359 / DSM 70799 / NBRC 1267 / NRRL Y-1140 / WM37)</name>
    <name type="common">Yeast</name>
    <name type="synonym">Candida sphaerica</name>
    <dbReference type="NCBI Taxonomy" id="284590"/>
    <lineage>
        <taxon>Eukaryota</taxon>
        <taxon>Fungi</taxon>
        <taxon>Dikarya</taxon>
        <taxon>Ascomycota</taxon>
        <taxon>Saccharomycotina</taxon>
        <taxon>Saccharomycetes</taxon>
        <taxon>Saccharomycetales</taxon>
        <taxon>Saccharomycetaceae</taxon>
        <taxon>Kluyveromyces</taxon>
    </lineage>
</organism>
<accession>Q9HG13</accession>
<accession>Q6CV59</accession>
<gene>
    <name type="primary">MATA2</name>
    <name type="synonym">A2</name>
    <name type="ordered locus">KLLA0C03157g</name>
</gene>
<gene>
    <name type="primary">HMRA2</name>
    <name type="ordered locus">KLLA0B14575g</name>
</gene>
<reference key="1">
    <citation type="journal article" date="2000" name="Genetics">
        <title>Kluyveromyces lactis Sir2p regulates cation sensitivity and maintains a specialized chromatin structure at the cryptic alpha-locus.</title>
        <authorList>
            <person name="Aastroem S.U."/>
            <person name="Kegel A."/>
            <person name="Sjoestrand J.O.O."/>
            <person name="Rine J."/>
        </authorList>
    </citation>
    <scope>NUCLEOTIDE SEQUENCE [GENOMIC DNA]</scope>
</reference>
<reference key="2">
    <citation type="journal article" date="2004" name="Proc. Natl. Acad. Sci. U.S.A.">
        <title>Evolution of the MAT locus and its Ho endonuclease in yeast species.</title>
        <authorList>
            <person name="Butler G."/>
            <person name="Kenny C."/>
            <person name="Fagan A."/>
            <person name="Kurischko C."/>
            <person name="Gaillardin C."/>
            <person name="Wolfe K.H."/>
        </authorList>
    </citation>
    <scope>NUCLEOTIDE SEQUENCE [GENOMIC DNA]</scope>
    <source>
        <strain>ATCC 76492 / CBS 2359/152 / CLIB 210</strain>
    </source>
</reference>
<reference key="3">
    <citation type="journal article" date="2004" name="Nature">
        <title>Genome evolution in yeasts.</title>
        <authorList>
            <person name="Dujon B."/>
            <person name="Sherman D."/>
            <person name="Fischer G."/>
            <person name="Durrens P."/>
            <person name="Casaregola S."/>
            <person name="Lafontaine I."/>
            <person name="de Montigny J."/>
            <person name="Marck C."/>
            <person name="Neuveglise C."/>
            <person name="Talla E."/>
            <person name="Goffard N."/>
            <person name="Frangeul L."/>
            <person name="Aigle M."/>
            <person name="Anthouard V."/>
            <person name="Babour A."/>
            <person name="Barbe V."/>
            <person name="Barnay S."/>
            <person name="Blanchin S."/>
            <person name="Beckerich J.-M."/>
            <person name="Beyne E."/>
            <person name="Bleykasten C."/>
            <person name="Boisrame A."/>
            <person name="Boyer J."/>
            <person name="Cattolico L."/>
            <person name="Confanioleri F."/>
            <person name="de Daruvar A."/>
            <person name="Despons L."/>
            <person name="Fabre E."/>
            <person name="Fairhead C."/>
            <person name="Ferry-Dumazet H."/>
            <person name="Groppi A."/>
            <person name="Hantraye F."/>
            <person name="Hennequin C."/>
            <person name="Jauniaux N."/>
            <person name="Joyet P."/>
            <person name="Kachouri R."/>
            <person name="Kerrest A."/>
            <person name="Koszul R."/>
            <person name="Lemaire M."/>
            <person name="Lesur I."/>
            <person name="Ma L."/>
            <person name="Muller H."/>
            <person name="Nicaud J.-M."/>
            <person name="Nikolski M."/>
            <person name="Oztas S."/>
            <person name="Ozier-Kalogeropoulos O."/>
            <person name="Pellenz S."/>
            <person name="Potier S."/>
            <person name="Richard G.-F."/>
            <person name="Straub M.-L."/>
            <person name="Suleau A."/>
            <person name="Swennen D."/>
            <person name="Tekaia F."/>
            <person name="Wesolowski-Louvel M."/>
            <person name="Westhof E."/>
            <person name="Wirth B."/>
            <person name="Zeniou-Meyer M."/>
            <person name="Zivanovic Y."/>
            <person name="Bolotin-Fukuhara M."/>
            <person name="Thierry A."/>
            <person name="Bouchier C."/>
            <person name="Caudron B."/>
            <person name="Scarpelli C."/>
            <person name="Gaillardin C."/>
            <person name="Weissenbach J."/>
            <person name="Wincker P."/>
            <person name="Souciet J.-L."/>
        </authorList>
    </citation>
    <scope>NUCLEOTIDE SEQUENCE [LARGE SCALE GENOMIC DNA]</scope>
    <source>
        <strain>ATCC 8585 / CBS 2359 / DSM 70799 / NBRC 1267 / NRRL Y-1140 / WM37</strain>
    </source>
</reference>
<protein>
    <recommendedName>
        <fullName>Mating-type protein A2</fullName>
    </recommendedName>
    <alternativeName>
        <fullName>A2 HMG domain transcription factor</fullName>
    </alternativeName>
</protein>
<proteinExistence type="inferred from homology"/>
<keyword id="KW-0010">Activator</keyword>
<keyword id="KW-0238">DNA-binding</keyword>
<keyword id="KW-0539">Nucleus</keyword>
<keyword id="KW-1185">Reference proteome</keyword>
<keyword id="KW-0804">Transcription</keyword>
<keyword id="KW-0805">Transcription regulation</keyword>
<comment type="function">
    <text evidence="1">Mating type proteins are sequence specific DNA-binding proteins that act as master switches in yeast differentiation by controlling gene expression in a cell type-specific fashion. Transcriptional activator that induces the transcription of a-specific genes (By similarity).</text>
</comment>
<comment type="subcellular location">
    <subcellularLocation>
        <location evidence="1">Nucleus</location>
    </subcellularLocation>
</comment>
<comment type="miscellaneous">
    <text>There are three genetic loci for mating type genes in K.lactis. MAT is the expression locus that determines the mating type of the cell, whereas HML (containing HMLALPHA1, HMLALPHA2 and HMLALPHA3) and HMR (containing HMRA1 and HMRA2) represent silenced repositories of mating type information. The mating type is determined by the MAT locus, which contains either a copy of HML or of HMR. Diploid cells are usually heterozygous for the MAT locus.</text>
</comment>
<comment type="similarity">
    <text evidence="3">Belongs to the MATA2 family.</text>
</comment>
<dbReference type="EMBL" id="AF195067">
    <property type="protein sequence ID" value="AAG21093.1"/>
    <property type="molecule type" value="Genomic_DNA"/>
</dbReference>
<dbReference type="EMBL" id="AJ617304">
    <property type="protein sequence ID" value="CAE84410.1"/>
    <property type="molecule type" value="Genomic_DNA"/>
</dbReference>
<dbReference type="EMBL" id="CR382122">
    <property type="protein sequence ID" value="CAH02573.1"/>
    <property type="molecule type" value="Genomic_DNA"/>
</dbReference>
<dbReference type="EMBL" id="CR382123">
    <property type="protein sequence ID" value="CAH01189.1"/>
    <property type="molecule type" value="Genomic_DNA"/>
</dbReference>
<dbReference type="RefSeq" id="XP_452180.1">
    <property type="nucleotide sequence ID" value="XM_452180.1"/>
</dbReference>
<dbReference type="RefSeq" id="XP_452338.1">
    <property type="nucleotide sequence ID" value="XM_452338.1"/>
</dbReference>
<dbReference type="STRING" id="284590.Q9HG13"/>
<dbReference type="PaxDb" id="284590-Q9HG13"/>
<dbReference type="KEGG" id="kla:KLLA0_B14575g"/>
<dbReference type="KEGG" id="kla:KLLA0_C03157g"/>
<dbReference type="eggNOG" id="ENOG502SG0V">
    <property type="taxonomic scope" value="Eukaryota"/>
</dbReference>
<dbReference type="HOGENOM" id="CLU_1082067_0_0_1"/>
<dbReference type="InParanoid" id="Q9HG13"/>
<dbReference type="Proteomes" id="UP000000598">
    <property type="component" value="Chromosome B"/>
</dbReference>
<dbReference type="Proteomes" id="UP000000598">
    <property type="component" value="Chromosome C"/>
</dbReference>
<dbReference type="GO" id="GO:0005634">
    <property type="term" value="C:nucleus"/>
    <property type="evidence" value="ECO:0007669"/>
    <property type="project" value="UniProtKB-SubCell"/>
</dbReference>
<dbReference type="GO" id="GO:0003677">
    <property type="term" value="F:DNA binding"/>
    <property type="evidence" value="ECO:0007669"/>
    <property type="project" value="UniProtKB-KW"/>
</dbReference>
<evidence type="ECO:0000250" key="1"/>
<evidence type="ECO:0000256" key="2">
    <source>
        <dbReference type="SAM" id="MobiDB-lite"/>
    </source>
</evidence>
<evidence type="ECO:0000305" key="3"/>
<feature type="chain" id="PRO_0000048582" description="Mating-type protein A2">
    <location>
        <begin position="1"/>
        <end position="257"/>
    </location>
</feature>
<feature type="DNA-binding region" description="HMG box">
    <location>
        <begin position="58"/>
        <end position="132"/>
    </location>
</feature>
<feature type="region of interest" description="Disordered" evidence="2">
    <location>
        <begin position="210"/>
        <end position="239"/>
    </location>
</feature>
<sequence length="257" mass="30205">MANSTLRRTTFFKLTTTEDEDTIPKLLQPNNNSVAFPNLKRTGKAFTNDTIKENTKKYTRPRNQFVLMRTLFNRRVNNHILQYYNKSKLEKKMFTLTSKITSELWNESSPDLKSYFSLLATLEENWHKYTHYCSWDRNSAQTLSMEPIELSQVRPRLISSLTVGAGSSVSTYTLRELLLVRKIKSRKRKTTTLTQDSSPTTKFKYKFKKQPKTKMNSNLSKLRFKSKQPPTPPEENSNVFKKRYTSENRIIEDLFLM</sequence>
<name>MATA2_KLULA</name>